<organism>
    <name type="scientific">Shigella flexneri serotype 5b (strain 8401)</name>
    <dbReference type="NCBI Taxonomy" id="373384"/>
    <lineage>
        <taxon>Bacteria</taxon>
        <taxon>Pseudomonadati</taxon>
        <taxon>Pseudomonadota</taxon>
        <taxon>Gammaproteobacteria</taxon>
        <taxon>Enterobacterales</taxon>
        <taxon>Enterobacteriaceae</taxon>
        <taxon>Shigella</taxon>
    </lineage>
</organism>
<sequence>MARYDLVDRLNTTFRQMEQELATFAAHLEQHKLLVARVFSLPEVKKEDEHNPLNRIEVKQHLGNDAQSLALRHFRHLFIQQQSENRSSKAAVRLPGVLCYQVDNLSQAALVSHIQHINKLKTTFEHIVTVESELPTAARFEWVHRHLPGLITLNAYRTLTVLHDPATLRFGWANKHIIKNLHRDEVLAQLEKSLKSPRSVAPWTREEWQRKLEREYQDIAALPQNAKLKIKRPVKVQPIARVWYKGDQKQVQHACPTPLIALINRDNGAGVPDVGELLNYDADNVQHRYKPQAQPLRLIIPRLHLYVAD</sequence>
<protein>
    <recommendedName>
        <fullName evidence="1">DNA replication terminus site-binding protein</fullName>
        <shortName evidence="1">Ter-binding protein</shortName>
    </recommendedName>
</protein>
<gene>
    <name evidence="1" type="primary">tus</name>
    <name type="ordered locus">SFV_1626</name>
</gene>
<feature type="chain" id="PRO_1000014333" description="DNA replication terminus site-binding protein">
    <location>
        <begin position="1"/>
        <end position="309"/>
    </location>
</feature>
<reference key="1">
    <citation type="journal article" date="2006" name="BMC Genomics">
        <title>Complete genome sequence of Shigella flexneri 5b and comparison with Shigella flexneri 2a.</title>
        <authorList>
            <person name="Nie H."/>
            <person name="Yang F."/>
            <person name="Zhang X."/>
            <person name="Yang J."/>
            <person name="Chen L."/>
            <person name="Wang J."/>
            <person name="Xiong Z."/>
            <person name="Peng J."/>
            <person name="Sun L."/>
            <person name="Dong J."/>
            <person name="Xue Y."/>
            <person name="Xu X."/>
            <person name="Chen S."/>
            <person name="Yao Z."/>
            <person name="Shen Y."/>
            <person name="Jin Q."/>
        </authorList>
    </citation>
    <scope>NUCLEOTIDE SEQUENCE [LARGE SCALE GENOMIC DNA]</scope>
    <source>
        <strain>8401</strain>
    </source>
</reference>
<dbReference type="EMBL" id="CP000266">
    <property type="protein sequence ID" value="ABF03799.1"/>
    <property type="molecule type" value="Genomic_DNA"/>
</dbReference>
<dbReference type="RefSeq" id="WP_000135186.1">
    <property type="nucleotide sequence ID" value="NC_008258.1"/>
</dbReference>
<dbReference type="SMR" id="Q0T4G6"/>
<dbReference type="KEGG" id="sfv:SFV_1626"/>
<dbReference type="HOGENOM" id="CLU_078181_0_0_6"/>
<dbReference type="Proteomes" id="UP000000659">
    <property type="component" value="Chromosome"/>
</dbReference>
<dbReference type="GO" id="GO:0005737">
    <property type="term" value="C:cytoplasm"/>
    <property type="evidence" value="ECO:0007669"/>
    <property type="project" value="UniProtKB-SubCell"/>
</dbReference>
<dbReference type="GO" id="GO:0003677">
    <property type="term" value="F:DNA binding"/>
    <property type="evidence" value="ECO:0007669"/>
    <property type="project" value="UniProtKB-UniRule"/>
</dbReference>
<dbReference type="GO" id="GO:0006274">
    <property type="term" value="P:DNA replication termination"/>
    <property type="evidence" value="ECO:0007669"/>
    <property type="project" value="UniProtKB-UniRule"/>
</dbReference>
<dbReference type="Gene3D" id="3.30.54.10">
    <property type="match status" value="1"/>
</dbReference>
<dbReference type="Gene3D" id="3.50.14.10">
    <property type="entry name" value="Replication terminator Tus, domain 1 superfamily/Replication terminator Tus"/>
    <property type="match status" value="1"/>
</dbReference>
<dbReference type="HAMAP" id="MF_00483">
    <property type="entry name" value="Rep_term_Tus"/>
    <property type="match status" value="1"/>
</dbReference>
<dbReference type="InterPro" id="IPR008865">
    <property type="entry name" value="DNA_replication_term_site-bd"/>
</dbReference>
<dbReference type="InterPro" id="IPR036381">
    <property type="entry name" value="Tus_dom1"/>
</dbReference>
<dbReference type="InterPro" id="IPR036384">
    <property type="entry name" value="Tus_sf"/>
</dbReference>
<dbReference type="NCBIfam" id="TIGR02648">
    <property type="entry name" value="rep_term_tus"/>
    <property type="match status" value="1"/>
</dbReference>
<dbReference type="Pfam" id="PF05472">
    <property type="entry name" value="Ter"/>
    <property type="match status" value="1"/>
</dbReference>
<dbReference type="SUPFAM" id="SSF56596">
    <property type="entry name" value="Replication terminator protein (Tus)"/>
    <property type="match status" value="1"/>
</dbReference>
<evidence type="ECO:0000255" key="1">
    <source>
        <dbReference type="HAMAP-Rule" id="MF_00483"/>
    </source>
</evidence>
<accession>Q0T4G6</accession>
<keyword id="KW-0963">Cytoplasm</keyword>
<keyword id="KW-0235">DNA replication</keyword>
<keyword id="KW-0238">DNA-binding</keyword>
<name>TUS_SHIF8</name>
<proteinExistence type="inferred from homology"/>
<comment type="function">
    <text evidence="1">Trans-acting protein required for termination of DNA replication. Binds to DNA replication terminator sequences (terA to terF) to prevent the passage of replication forks. The termination efficiency will be affected by the affinity of this protein for the terminator sequence.</text>
</comment>
<comment type="subcellular location">
    <subcellularLocation>
        <location evidence="1">Cytoplasm</location>
    </subcellularLocation>
</comment>
<comment type="similarity">
    <text evidence="1">Belongs to the Tus family.</text>
</comment>